<feature type="chain" id="PRO_1000186386" description="Bifunctional protein GlmU">
    <location>
        <begin position="1"/>
        <end position="454"/>
    </location>
</feature>
<feature type="region of interest" description="Pyrophosphorylase" evidence="1">
    <location>
        <begin position="1"/>
        <end position="227"/>
    </location>
</feature>
<feature type="region of interest" description="Linker" evidence="1">
    <location>
        <begin position="228"/>
        <end position="248"/>
    </location>
</feature>
<feature type="region of interest" description="N-acetyltransferase" evidence="1">
    <location>
        <begin position="249"/>
        <end position="454"/>
    </location>
</feature>
<feature type="active site" description="Proton acceptor" evidence="1">
    <location>
        <position position="361"/>
    </location>
</feature>
<feature type="binding site" evidence="1">
    <location>
        <begin position="9"/>
        <end position="12"/>
    </location>
    <ligand>
        <name>UDP-N-acetyl-alpha-D-glucosamine</name>
        <dbReference type="ChEBI" id="CHEBI:57705"/>
    </ligand>
</feature>
<feature type="binding site" evidence="1">
    <location>
        <position position="23"/>
    </location>
    <ligand>
        <name>UDP-N-acetyl-alpha-D-glucosamine</name>
        <dbReference type="ChEBI" id="CHEBI:57705"/>
    </ligand>
</feature>
<feature type="binding site" evidence="1">
    <location>
        <position position="74"/>
    </location>
    <ligand>
        <name>UDP-N-acetyl-alpha-D-glucosamine</name>
        <dbReference type="ChEBI" id="CHEBI:57705"/>
    </ligand>
</feature>
<feature type="binding site" evidence="1">
    <location>
        <begin position="79"/>
        <end position="80"/>
    </location>
    <ligand>
        <name>UDP-N-acetyl-alpha-D-glucosamine</name>
        <dbReference type="ChEBI" id="CHEBI:57705"/>
    </ligand>
</feature>
<feature type="binding site" evidence="1">
    <location>
        <begin position="101"/>
        <end position="103"/>
    </location>
    <ligand>
        <name>UDP-N-acetyl-alpha-D-glucosamine</name>
        <dbReference type="ChEBI" id="CHEBI:57705"/>
    </ligand>
</feature>
<feature type="binding site" evidence="1">
    <location>
        <position position="103"/>
    </location>
    <ligand>
        <name>Mg(2+)</name>
        <dbReference type="ChEBI" id="CHEBI:18420"/>
    </ligand>
</feature>
<feature type="binding site" evidence="1">
    <location>
        <position position="138"/>
    </location>
    <ligand>
        <name>UDP-N-acetyl-alpha-D-glucosamine</name>
        <dbReference type="ChEBI" id="CHEBI:57705"/>
    </ligand>
</feature>
<feature type="binding site" evidence="1">
    <location>
        <position position="152"/>
    </location>
    <ligand>
        <name>UDP-N-acetyl-alpha-D-glucosamine</name>
        <dbReference type="ChEBI" id="CHEBI:57705"/>
    </ligand>
</feature>
<feature type="binding site" evidence="1">
    <location>
        <position position="167"/>
    </location>
    <ligand>
        <name>UDP-N-acetyl-alpha-D-glucosamine</name>
        <dbReference type="ChEBI" id="CHEBI:57705"/>
    </ligand>
</feature>
<feature type="binding site" evidence="1">
    <location>
        <position position="225"/>
    </location>
    <ligand>
        <name>Mg(2+)</name>
        <dbReference type="ChEBI" id="CHEBI:18420"/>
    </ligand>
</feature>
<feature type="binding site" evidence="1">
    <location>
        <position position="225"/>
    </location>
    <ligand>
        <name>UDP-N-acetyl-alpha-D-glucosamine</name>
        <dbReference type="ChEBI" id="CHEBI:57705"/>
    </ligand>
</feature>
<feature type="binding site" evidence="1">
    <location>
        <position position="331"/>
    </location>
    <ligand>
        <name>UDP-N-acetyl-alpha-D-glucosamine</name>
        <dbReference type="ChEBI" id="CHEBI:57705"/>
    </ligand>
</feature>
<feature type="binding site" evidence="1">
    <location>
        <position position="349"/>
    </location>
    <ligand>
        <name>UDP-N-acetyl-alpha-D-glucosamine</name>
        <dbReference type="ChEBI" id="CHEBI:57705"/>
    </ligand>
</feature>
<feature type="binding site" evidence="1">
    <location>
        <position position="364"/>
    </location>
    <ligand>
        <name>UDP-N-acetyl-alpha-D-glucosamine</name>
        <dbReference type="ChEBI" id="CHEBI:57705"/>
    </ligand>
</feature>
<feature type="binding site" evidence="1">
    <location>
        <position position="375"/>
    </location>
    <ligand>
        <name>UDP-N-acetyl-alpha-D-glucosamine</name>
        <dbReference type="ChEBI" id="CHEBI:57705"/>
    </ligand>
</feature>
<feature type="binding site" evidence="1">
    <location>
        <position position="378"/>
    </location>
    <ligand>
        <name>acetyl-CoA</name>
        <dbReference type="ChEBI" id="CHEBI:57288"/>
    </ligand>
</feature>
<feature type="binding site" evidence="1">
    <location>
        <begin position="384"/>
        <end position="385"/>
    </location>
    <ligand>
        <name>acetyl-CoA</name>
        <dbReference type="ChEBI" id="CHEBI:57288"/>
    </ligand>
</feature>
<feature type="binding site" evidence="1">
    <location>
        <position position="403"/>
    </location>
    <ligand>
        <name>acetyl-CoA</name>
        <dbReference type="ChEBI" id="CHEBI:57288"/>
    </ligand>
</feature>
<feature type="binding site" evidence="1">
    <location>
        <position position="421"/>
    </location>
    <ligand>
        <name>acetyl-CoA</name>
        <dbReference type="ChEBI" id="CHEBI:57288"/>
    </ligand>
</feature>
<feature type="binding site" evidence="1">
    <location>
        <position position="438"/>
    </location>
    <ligand>
        <name>acetyl-CoA</name>
        <dbReference type="ChEBI" id="CHEBI:57288"/>
    </ligand>
</feature>
<comment type="function">
    <text evidence="1">Catalyzes the last two sequential reactions in the de novo biosynthetic pathway for UDP-N-acetylglucosamine (UDP-GlcNAc). The C-terminal domain catalyzes the transfer of acetyl group from acetyl coenzyme A to glucosamine-1-phosphate (GlcN-1-P) to produce N-acetylglucosamine-1-phosphate (GlcNAc-1-P), which is converted into UDP-GlcNAc by the transfer of uridine 5-monophosphate (from uridine 5-triphosphate), a reaction catalyzed by the N-terminal domain.</text>
</comment>
<comment type="catalytic activity">
    <reaction evidence="1">
        <text>alpha-D-glucosamine 1-phosphate + acetyl-CoA = N-acetyl-alpha-D-glucosamine 1-phosphate + CoA + H(+)</text>
        <dbReference type="Rhea" id="RHEA:13725"/>
        <dbReference type="ChEBI" id="CHEBI:15378"/>
        <dbReference type="ChEBI" id="CHEBI:57287"/>
        <dbReference type="ChEBI" id="CHEBI:57288"/>
        <dbReference type="ChEBI" id="CHEBI:57776"/>
        <dbReference type="ChEBI" id="CHEBI:58516"/>
        <dbReference type="EC" id="2.3.1.157"/>
    </reaction>
</comment>
<comment type="catalytic activity">
    <reaction evidence="1">
        <text>N-acetyl-alpha-D-glucosamine 1-phosphate + UTP + H(+) = UDP-N-acetyl-alpha-D-glucosamine + diphosphate</text>
        <dbReference type="Rhea" id="RHEA:13509"/>
        <dbReference type="ChEBI" id="CHEBI:15378"/>
        <dbReference type="ChEBI" id="CHEBI:33019"/>
        <dbReference type="ChEBI" id="CHEBI:46398"/>
        <dbReference type="ChEBI" id="CHEBI:57705"/>
        <dbReference type="ChEBI" id="CHEBI:57776"/>
        <dbReference type="EC" id="2.7.7.23"/>
    </reaction>
</comment>
<comment type="cofactor">
    <cofactor evidence="1">
        <name>Mg(2+)</name>
        <dbReference type="ChEBI" id="CHEBI:18420"/>
    </cofactor>
    <text evidence="1">Binds 1 Mg(2+) ion per subunit.</text>
</comment>
<comment type="pathway">
    <text evidence="1">Nucleotide-sugar biosynthesis; UDP-N-acetyl-alpha-D-glucosamine biosynthesis; N-acetyl-alpha-D-glucosamine 1-phosphate from alpha-D-glucosamine 6-phosphate (route II): step 2/2.</text>
</comment>
<comment type="pathway">
    <text evidence="1">Nucleotide-sugar biosynthesis; UDP-N-acetyl-alpha-D-glucosamine biosynthesis; UDP-N-acetyl-alpha-D-glucosamine from N-acetyl-alpha-D-glucosamine 1-phosphate: step 1/1.</text>
</comment>
<comment type="pathway">
    <text evidence="1">Bacterial outer membrane biogenesis; LPS lipid A biosynthesis.</text>
</comment>
<comment type="subunit">
    <text evidence="1">Homotrimer.</text>
</comment>
<comment type="subcellular location">
    <subcellularLocation>
        <location evidence="1">Cytoplasm</location>
    </subcellularLocation>
</comment>
<comment type="similarity">
    <text evidence="1">In the N-terminal section; belongs to the N-acetylglucosamine-1-phosphate uridyltransferase family.</text>
</comment>
<comment type="similarity">
    <text evidence="1">In the C-terminal section; belongs to the transferase hexapeptide repeat family.</text>
</comment>
<reference key="1">
    <citation type="submission" date="2008-06" db="EMBL/GenBank/DDBJ databases">
        <title>Genome and proteome analysis of A. pleuropneumoniae serotype 7.</title>
        <authorList>
            <person name="Linke B."/>
            <person name="Buettner F."/>
            <person name="Martinez-Arias R."/>
            <person name="Goesmann A."/>
            <person name="Baltes N."/>
            <person name="Tegetmeyer H."/>
            <person name="Singh M."/>
            <person name="Gerlach G.F."/>
        </authorList>
    </citation>
    <scope>NUCLEOTIDE SEQUENCE [LARGE SCALE GENOMIC DNA]</scope>
    <source>
        <strain>AP76</strain>
    </source>
</reference>
<accession>B3H116</accession>
<gene>
    <name evidence="1" type="primary">glmU</name>
    <name type="ordered locus">APP7_0633</name>
</gene>
<proteinExistence type="inferred from homology"/>
<dbReference type="EC" id="2.7.7.23" evidence="1"/>
<dbReference type="EC" id="2.3.1.157" evidence="1"/>
<dbReference type="EMBL" id="CP001091">
    <property type="protein sequence ID" value="ACE61285.1"/>
    <property type="molecule type" value="Genomic_DNA"/>
</dbReference>
<dbReference type="RefSeq" id="WP_005617080.1">
    <property type="nucleotide sequence ID" value="NC_010939.1"/>
</dbReference>
<dbReference type="SMR" id="B3H116"/>
<dbReference type="KEGG" id="apa:APP7_0633"/>
<dbReference type="HOGENOM" id="CLU_029499_15_2_6"/>
<dbReference type="UniPathway" id="UPA00113">
    <property type="reaction ID" value="UER00532"/>
</dbReference>
<dbReference type="UniPathway" id="UPA00113">
    <property type="reaction ID" value="UER00533"/>
</dbReference>
<dbReference type="UniPathway" id="UPA00973"/>
<dbReference type="Proteomes" id="UP000001226">
    <property type="component" value="Chromosome"/>
</dbReference>
<dbReference type="GO" id="GO:0005737">
    <property type="term" value="C:cytoplasm"/>
    <property type="evidence" value="ECO:0007669"/>
    <property type="project" value="UniProtKB-SubCell"/>
</dbReference>
<dbReference type="GO" id="GO:0016020">
    <property type="term" value="C:membrane"/>
    <property type="evidence" value="ECO:0007669"/>
    <property type="project" value="GOC"/>
</dbReference>
<dbReference type="GO" id="GO:0019134">
    <property type="term" value="F:glucosamine-1-phosphate N-acetyltransferase activity"/>
    <property type="evidence" value="ECO:0007669"/>
    <property type="project" value="UniProtKB-UniRule"/>
</dbReference>
<dbReference type="GO" id="GO:0000287">
    <property type="term" value="F:magnesium ion binding"/>
    <property type="evidence" value="ECO:0007669"/>
    <property type="project" value="UniProtKB-UniRule"/>
</dbReference>
<dbReference type="GO" id="GO:0003977">
    <property type="term" value="F:UDP-N-acetylglucosamine diphosphorylase activity"/>
    <property type="evidence" value="ECO:0007669"/>
    <property type="project" value="UniProtKB-UniRule"/>
</dbReference>
<dbReference type="GO" id="GO:0000902">
    <property type="term" value="P:cell morphogenesis"/>
    <property type="evidence" value="ECO:0007669"/>
    <property type="project" value="UniProtKB-UniRule"/>
</dbReference>
<dbReference type="GO" id="GO:0071555">
    <property type="term" value="P:cell wall organization"/>
    <property type="evidence" value="ECO:0007669"/>
    <property type="project" value="UniProtKB-KW"/>
</dbReference>
<dbReference type="GO" id="GO:0009245">
    <property type="term" value="P:lipid A biosynthetic process"/>
    <property type="evidence" value="ECO:0007669"/>
    <property type="project" value="UniProtKB-UniRule"/>
</dbReference>
<dbReference type="GO" id="GO:0009252">
    <property type="term" value="P:peptidoglycan biosynthetic process"/>
    <property type="evidence" value="ECO:0007669"/>
    <property type="project" value="UniProtKB-UniRule"/>
</dbReference>
<dbReference type="GO" id="GO:0008360">
    <property type="term" value="P:regulation of cell shape"/>
    <property type="evidence" value="ECO:0007669"/>
    <property type="project" value="UniProtKB-KW"/>
</dbReference>
<dbReference type="GO" id="GO:0006048">
    <property type="term" value="P:UDP-N-acetylglucosamine biosynthetic process"/>
    <property type="evidence" value="ECO:0007669"/>
    <property type="project" value="UniProtKB-UniPathway"/>
</dbReference>
<dbReference type="CDD" id="cd02540">
    <property type="entry name" value="GT2_GlmU_N_bac"/>
    <property type="match status" value="1"/>
</dbReference>
<dbReference type="CDD" id="cd03353">
    <property type="entry name" value="LbH_GlmU_C"/>
    <property type="match status" value="1"/>
</dbReference>
<dbReference type="FunFam" id="3.90.550.10:FF:000006">
    <property type="entry name" value="Bifunctional protein GlmU"/>
    <property type="match status" value="1"/>
</dbReference>
<dbReference type="Gene3D" id="2.160.10.10">
    <property type="entry name" value="Hexapeptide repeat proteins"/>
    <property type="match status" value="1"/>
</dbReference>
<dbReference type="Gene3D" id="3.90.550.10">
    <property type="entry name" value="Spore Coat Polysaccharide Biosynthesis Protein SpsA, Chain A"/>
    <property type="match status" value="1"/>
</dbReference>
<dbReference type="HAMAP" id="MF_01631">
    <property type="entry name" value="GlmU"/>
    <property type="match status" value="1"/>
</dbReference>
<dbReference type="InterPro" id="IPR005882">
    <property type="entry name" value="Bifunctional_GlmU"/>
</dbReference>
<dbReference type="InterPro" id="IPR050065">
    <property type="entry name" value="GlmU-like"/>
</dbReference>
<dbReference type="InterPro" id="IPR038009">
    <property type="entry name" value="GlmU_C_LbH"/>
</dbReference>
<dbReference type="InterPro" id="IPR001451">
    <property type="entry name" value="Hexapep"/>
</dbReference>
<dbReference type="InterPro" id="IPR018357">
    <property type="entry name" value="Hexapep_transf_CS"/>
</dbReference>
<dbReference type="InterPro" id="IPR025877">
    <property type="entry name" value="MobA-like_NTP_Trfase"/>
</dbReference>
<dbReference type="InterPro" id="IPR029044">
    <property type="entry name" value="Nucleotide-diphossugar_trans"/>
</dbReference>
<dbReference type="InterPro" id="IPR011004">
    <property type="entry name" value="Trimer_LpxA-like_sf"/>
</dbReference>
<dbReference type="NCBIfam" id="TIGR01173">
    <property type="entry name" value="glmU"/>
    <property type="match status" value="1"/>
</dbReference>
<dbReference type="NCBIfam" id="NF006986">
    <property type="entry name" value="PRK09451.1"/>
    <property type="match status" value="1"/>
</dbReference>
<dbReference type="PANTHER" id="PTHR43584:SF3">
    <property type="entry name" value="BIFUNCTIONAL PROTEIN GLMU"/>
    <property type="match status" value="1"/>
</dbReference>
<dbReference type="PANTHER" id="PTHR43584">
    <property type="entry name" value="NUCLEOTIDYL TRANSFERASE"/>
    <property type="match status" value="1"/>
</dbReference>
<dbReference type="Pfam" id="PF00132">
    <property type="entry name" value="Hexapep"/>
    <property type="match status" value="2"/>
</dbReference>
<dbReference type="Pfam" id="PF12804">
    <property type="entry name" value="NTP_transf_3"/>
    <property type="match status" value="1"/>
</dbReference>
<dbReference type="SUPFAM" id="SSF53448">
    <property type="entry name" value="Nucleotide-diphospho-sugar transferases"/>
    <property type="match status" value="1"/>
</dbReference>
<dbReference type="SUPFAM" id="SSF51161">
    <property type="entry name" value="Trimeric LpxA-like enzymes"/>
    <property type="match status" value="1"/>
</dbReference>
<dbReference type="PROSITE" id="PS00101">
    <property type="entry name" value="HEXAPEP_TRANSFERASES"/>
    <property type="match status" value="1"/>
</dbReference>
<keyword id="KW-0012">Acyltransferase</keyword>
<keyword id="KW-0133">Cell shape</keyword>
<keyword id="KW-0961">Cell wall biogenesis/degradation</keyword>
<keyword id="KW-0963">Cytoplasm</keyword>
<keyword id="KW-0460">Magnesium</keyword>
<keyword id="KW-0479">Metal-binding</keyword>
<keyword id="KW-0511">Multifunctional enzyme</keyword>
<keyword id="KW-0548">Nucleotidyltransferase</keyword>
<keyword id="KW-0573">Peptidoglycan synthesis</keyword>
<keyword id="KW-0677">Repeat</keyword>
<keyword id="KW-0808">Transferase</keyword>
<protein>
    <recommendedName>
        <fullName evidence="1">Bifunctional protein GlmU</fullName>
    </recommendedName>
    <domain>
        <recommendedName>
            <fullName evidence="1">UDP-N-acetylglucosamine pyrophosphorylase</fullName>
            <ecNumber evidence="1">2.7.7.23</ecNumber>
        </recommendedName>
        <alternativeName>
            <fullName evidence="1">N-acetylglucosamine-1-phosphate uridyltransferase</fullName>
        </alternativeName>
    </domain>
    <domain>
        <recommendedName>
            <fullName evidence="1">Glucosamine-1-phosphate N-acetyltransferase</fullName>
            <ecNumber evidence="1">2.3.1.157</ecNumber>
        </recommendedName>
    </domain>
</protein>
<organism>
    <name type="scientific">Actinobacillus pleuropneumoniae serotype 7 (strain AP76)</name>
    <dbReference type="NCBI Taxonomy" id="537457"/>
    <lineage>
        <taxon>Bacteria</taxon>
        <taxon>Pseudomonadati</taxon>
        <taxon>Pseudomonadota</taxon>
        <taxon>Gammaproteobacteria</taxon>
        <taxon>Pasteurellales</taxon>
        <taxon>Pasteurellaceae</taxon>
        <taxon>Actinobacillus</taxon>
    </lineage>
</organism>
<name>GLMU_ACTP7</name>
<evidence type="ECO:0000255" key="1">
    <source>
        <dbReference type="HAMAP-Rule" id="MF_01631"/>
    </source>
</evidence>
<sequence length="454" mass="49056">MTQLSVVILAAGKGTRMYSDLPKVLHTVAGKPMVQHVIDTAKQIDAKQIHLIYGHGGELLQQRLSSEPVNWVLQAEQLGTGHAMQQAAPFFADDENILMLYGDAPLITKETLERLIAAKPENGIALLTVELENPTGYGRIIRENGSVVAIVEQKDANAEQLKIREVNTGVMVASGASFKKWLANLNNNNAQGEYYITDVIAMANQDGYKVQAVQASEFMEVEGANNRLQLAALERFYQKTQAEKLLLAGVRLIDQARFDIRGSLTHGKDVEIDVNVIIEGEVKLGNRVRIGAGCVLKNCEIGDDVEIKPYSVIEDAVVGKAAQIGPFSRLRPGANLAEETHVGNFVEIKNAQVGKGSKVNHLTYVGDAEVGSNCNIGAGVITCNYDGANKFKTIIGNNVFVGSDSQLVAPVTIADGATIGAGATVTKDVAENELVISRVPQRHIQGWQRPTKKK</sequence>